<gene>
    <name evidence="1" type="primary">rplP</name>
    <name type="ordered locus">PG_1931</name>
</gene>
<sequence>MLQPKKTKFRRQQKGRMKGFAQRGNQLSFGSFGIKSLQSKWITGRQIEAARIAVTRYMQRQGQVWVRIFPDKPITKKGEGVRMGKGKGAPEGFVAPITPGRIIFEVEGVPYEIAKEALRLAAQKLPVTTKFVVRHDYDIQNQNA</sequence>
<organism>
    <name type="scientific">Porphyromonas gingivalis (strain ATCC BAA-308 / W83)</name>
    <dbReference type="NCBI Taxonomy" id="242619"/>
    <lineage>
        <taxon>Bacteria</taxon>
        <taxon>Pseudomonadati</taxon>
        <taxon>Bacteroidota</taxon>
        <taxon>Bacteroidia</taxon>
        <taxon>Bacteroidales</taxon>
        <taxon>Porphyromonadaceae</taxon>
        <taxon>Porphyromonas</taxon>
    </lineage>
</organism>
<accession>Q7MTM0</accession>
<evidence type="ECO:0000255" key="1">
    <source>
        <dbReference type="HAMAP-Rule" id="MF_01342"/>
    </source>
</evidence>
<evidence type="ECO:0000305" key="2"/>
<comment type="function">
    <text evidence="1">Binds 23S rRNA and is also seen to make contacts with the A and possibly P site tRNAs.</text>
</comment>
<comment type="subunit">
    <text evidence="1">Part of the 50S ribosomal subunit.</text>
</comment>
<comment type="similarity">
    <text evidence="1">Belongs to the universal ribosomal protein uL16 family.</text>
</comment>
<dbReference type="EMBL" id="AE015924">
    <property type="protein sequence ID" value="AAQ66912.1"/>
    <property type="molecule type" value="Genomic_DNA"/>
</dbReference>
<dbReference type="RefSeq" id="WP_010956445.1">
    <property type="nucleotide sequence ID" value="NC_002950.2"/>
</dbReference>
<dbReference type="SMR" id="Q7MTM0"/>
<dbReference type="STRING" id="242619.PG_1931"/>
<dbReference type="EnsemblBacteria" id="AAQ66912">
    <property type="protein sequence ID" value="AAQ66912"/>
    <property type="gene ID" value="PG_1931"/>
</dbReference>
<dbReference type="GeneID" id="29257012"/>
<dbReference type="KEGG" id="pgi:PG_1931"/>
<dbReference type="eggNOG" id="COG0197">
    <property type="taxonomic scope" value="Bacteria"/>
</dbReference>
<dbReference type="HOGENOM" id="CLU_078858_2_1_10"/>
<dbReference type="Proteomes" id="UP000000588">
    <property type="component" value="Chromosome"/>
</dbReference>
<dbReference type="GO" id="GO:0022625">
    <property type="term" value="C:cytosolic large ribosomal subunit"/>
    <property type="evidence" value="ECO:0007669"/>
    <property type="project" value="TreeGrafter"/>
</dbReference>
<dbReference type="GO" id="GO:0019843">
    <property type="term" value="F:rRNA binding"/>
    <property type="evidence" value="ECO:0007669"/>
    <property type="project" value="UniProtKB-UniRule"/>
</dbReference>
<dbReference type="GO" id="GO:0003735">
    <property type="term" value="F:structural constituent of ribosome"/>
    <property type="evidence" value="ECO:0007669"/>
    <property type="project" value="InterPro"/>
</dbReference>
<dbReference type="GO" id="GO:0000049">
    <property type="term" value="F:tRNA binding"/>
    <property type="evidence" value="ECO:0007669"/>
    <property type="project" value="UniProtKB-KW"/>
</dbReference>
<dbReference type="GO" id="GO:0006412">
    <property type="term" value="P:translation"/>
    <property type="evidence" value="ECO:0007669"/>
    <property type="project" value="UniProtKB-UniRule"/>
</dbReference>
<dbReference type="CDD" id="cd01433">
    <property type="entry name" value="Ribosomal_L16_L10e"/>
    <property type="match status" value="1"/>
</dbReference>
<dbReference type="FunFam" id="3.90.1170.10:FF:000001">
    <property type="entry name" value="50S ribosomal protein L16"/>
    <property type="match status" value="1"/>
</dbReference>
<dbReference type="Gene3D" id="3.90.1170.10">
    <property type="entry name" value="Ribosomal protein L10e/L16"/>
    <property type="match status" value="1"/>
</dbReference>
<dbReference type="HAMAP" id="MF_01342">
    <property type="entry name" value="Ribosomal_uL16"/>
    <property type="match status" value="1"/>
</dbReference>
<dbReference type="InterPro" id="IPR047873">
    <property type="entry name" value="Ribosomal_uL16"/>
</dbReference>
<dbReference type="InterPro" id="IPR000114">
    <property type="entry name" value="Ribosomal_uL16_bact-type"/>
</dbReference>
<dbReference type="InterPro" id="IPR020798">
    <property type="entry name" value="Ribosomal_uL16_CS"/>
</dbReference>
<dbReference type="InterPro" id="IPR016180">
    <property type="entry name" value="Ribosomal_uL16_dom"/>
</dbReference>
<dbReference type="InterPro" id="IPR036920">
    <property type="entry name" value="Ribosomal_uL16_sf"/>
</dbReference>
<dbReference type="NCBIfam" id="TIGR01164">
    <property type="entry name" value="rplP_bact"/>
    <property type="match status" value="1"/>
</dbReference>
<dbReference type="PANTHER" id="PTHR12220">
    <property type="entry name" value="50S/60S RIBOSOMAL PROTEIN L16"/>
    <property type="match status" value="1"/>
</dbReference>
<dbReference type="PANTHER" id="PTHR12220:SF13">
    <property type="entry name" value="LARGE RIBOSOMAL SUBUNIT PROTEIN UL16M"/>
    <property type="match status" value="1"/>
</dbReference>
<dbReference type="Pfam" id="PF00252">
    <property type="entry name" value="Ribosomal_L16"/>
    <property type="match status" value="1"/>
</dbReference>
<dbReference type="PRINTS" id="PR00060">
    <property type="entry name" value="RIBOSOMALL16"/>
</dbReference>
<dbReference type="SUPFAM" id="SSF54686">
    <property type="entry name" value="Ribosomal protein L16p/L10e"/>
    <property type="match status" value="1"/>
</dbReference>
<dbReference type="PROSITE" id="PS00701">
    <property type="entry name" value="RIBOSOMAL_L16_2"/>
    <property type="match status" value="1"/>
</dbReference>
<protein>
    <recommendedName>
        <fullName evidence="1">Large ribosomal subunit protein uL16</fullName>
    </recommendedName>
    <alternativeName>
        <fullName evidence="2">50S ribosomal protein L16</fullName>
    </alternativeName>
</protein>
<feature type="chain" id="PRO_0000062166" description="Large ribosomal subunit protein uL16">
    <location>
        <begin position="1"/>
        <end position="144"/>
    </location>
</feature>
<keyword id="KW-1185">Reference proteome</keyword>
<keyword id="KW-0687">Ribonucleoprotein</keyword>
<keyword id="KW-0689">Ribosomal protein</keyword>
<keyword id="KW-0694">RNA-binding</keyword>
<keyword id="KW-0699">rRNA-binding</keyword>
<keyword id="KW-0820">tRNA-binding</keyword>
<reference key="1">
    <citation type="journal article" date="2003" name="J. Bacteriol.">
        <title>Complete genome sequence of the oral pathogenic bacterium Porphyromonas gingivalis strain W83.</title>
        <authorList>
            <person name="Nelson K.E."/>
            <person name="Fleischmann R.D."/>
            <person name="DeBoy R.T."/>
            <person name="Paulsen I.T."/>
            <person name="Fouts D.E."/>
            <person name="Eisen J.A."/>
            <person name="Daugherty S.C."/>
            <person name="Dodson R.J."/>
            <person name="Durkin A.S."/>
            <person name="Gwinn M.L."/>
            <person name="Haft D.H."/>
            <person name="Kolonay J.F."/>
            <person name="Nelson W.C."/>
            <person name="Mason T.M."/>
            <person name="Tallon L."/>
            <person name="Gray J."/>
            <person name="Granger D."/>
            <person name="Tettelin H."/>
            <person name="Dong H."/>
            <person name="Galvin J.L."/>
            <person name="Duncan M.J."/>
            <person name="Dewhirst F.E."/>
            <person name="Fraser C.M."/>
        </authorList>
    </citation>
    <scope>NUCLEOTIDE SEQUENCE [LARGE SCALE GENOMIC DNA]</scope>
    <source>
        <strain>ATCC BAA-308 / W83</strain>
    </source>
</reference>
<name>RL16_PORGI</name>
<proteinExistence type="inferred from homology"/>